<organism>
    <name type="scientific">Melia azedarach</name>
    <name type="common">Chinaberry tree</name>
    <dbReference type="NCBI Taxonomy" id="155640"/>
    <lineage>
        <taxon>Eukaryota</taxon>
        <taxon>Viridiplantae</taxon>
        <taxon>Streptophyta</taxon>
        <taxon>Embryophyta</taxon>
        <taxon>Tracheophyta</taxon>
        <taxon>Spermatophyta</taxon>
        <taxon>Magnoliopsida</taxon>
        <taxon>eudicotyledons</taxon>
        <taxon>Gunneridae</taxon>
        <taxon>Pentapetalae</taxon>
        <taxon>rosids</taxon>
        <taxon>malvids</taxon>
        <taxon>Sapindales</taxon>
        <taxon>Meliaceae</taxon>
        <taxon>Melia</taxon>
    </lineage>
</organism>
<name>CA164_MELAZ</name>
<keyword id="KW-0349">Heme</keyword>
<keyword id="KW-0408">Iron</keyword>
<keyword id="KW-0472">Membrane</keyword>
<keyword id="KW-0479">Metal-binding</keyword>
<keyword id="KW-0560">Oxidoreductase</keyword>
<keyword id="KW-0812">Transmembrane</keyword>
<keyword id="KW-1133">Transmembrane helix</keyword>
<comment type="function">
    <text evidence="3">Monooxygenase involved in the biosynthesis of limonoids triterpene natural products such as azadirachtin, an antifeedant widely used as bioinsecticide, and possessing many medicinal applications including anti-tumoral, anti-malarial, anti-rheumatic, antibacterial, anti-inflammatory, anti-pyretic and diuretic effects (PubMed:36701471). Catalyzes the conversion of (21S)-21-acetoxyl-apo-melianone to (21S)-21-acetyl-1-hydroxy-apo-melianone (PubMed:36701471).</text>
</comment>
<comment type="catalytic activity">
    <reaction evidence="3">
        <text>(21S)-21-acetoxyl-apo-melianone + reduced [NADPH--hemoprotein reductase] + O2 = (21S)-21-acetyl-1-hydroxy-apo-melianone + oxidized [NADPH--hemoprotein reductase] + H2O + H(+)</text>
        <dbReference type="Rhea" id="RHEA:80315"/>
        <dbReference type="Rhea" id="RHEA-COMP:11964"/>
        <dbReference type="Rhea" id="RHEA-COMP:11965"/>
        <dbReference type="ChEBI" id="CHEBI:15377"/>
        <dbReference type="ChEBI" id="CHEBI:15378"/>
        <dbReference type="ChEBI" id="CHEBI:15379"/>
        <dbReference type="ChEBI" id="CHEBI:57618"/>
        <dbReference type="ChEBI" id="CHEBI:58210"/>
        <dbReference type="ChEBI" id="CHEBI:231456"/>
        <dbReference type="ChEBI" id="CHEBI:231465"/>
    </reaction>
    <physiologicalReaction direction="left-to-right" evidence="3">
        <dbReference type="Rhea" id="RHEA:80316"/>
    </physiologicalReaction>
</comment>
<comment type="cofactor">
    <cofactor evidence="1">
        <name>heme</name>
        <dbReference type="ChEBI" id="CHEBI:30413"/>
    </cofactor>
</comment>
<comment type="pathway">
    <text evidence="3">Secondary metabolite biosynthesis; terpenoid biosynthesis.</text>
</comment>
<comment type="subcellular location">
    <subcellularLocation>
        <location evidence="2">Membrane</location>
        <topology evidence="2">Single-pass membrane protein</topology>
    </subcellularLocation>
</comment>
<comment type="tissue specificity">
    <text evidence="3">Mainly expressed in petioles and, to a lower extent, in roots.</text>
</comment>
<comment type="similarity">
    <text evidence="5">Belongs to the cytochrome P450 family.</text>
</comment>
<evidence type="ECO:0000250" key="1">
    <source>
        <dbReference type="UniProtKB" id="Q96242"/>
    </source>
</evidence>
<evidence type="ECO:0000255" key="2"/>
<evidence type="ECO:0000269" key="3">
    <source>
    </source>
</evidence>
<evidence type="ECO:0000303" key="4">
    <source>
    </source>
</evidence>
<evidence type="ECO:0000305" key="5"/>
<reference key="1">
    <citation type="journal article" date="2023" name="Science">
        <title>Complex scaffold remodeling in plant triterpene biosynthesis.</title>
        <authorList>
            <person name="De La Pena R."/>
            <person name="Hodgson H."/>
            <person name="Liu J.C."/>
            <person name="Stephenson M.J."/>
            <person name="Martin A.C."/>
            <person name="Owen C."/>
            <person name="Harkess A."/>
            <person name="Leebens-Mack J."/>
            <person name="Jimenez L.E."/>
            <person name="Osbourn A."/>
            <person name="Sattely E.S."/>
        </authorList>
    </citation>
    <scope>NUCLEOTIDE SEQUENCE [MRNA]</scope>
    <scope>FUNCTION</scope>
    <scope>CATALYTIC ACTIVITY</scope>
    <scope>PATHWAY</scope>
    <scope>TISSUE SPECIFICITY</scope>
    <source>
        <strain>cv. Valencia</strain>
    </source>
</reference>
<proteinExistence type="evidence at protein level"/>
<protein>
    <recommendedName>
        <fullName evidence="4">(21S)-21-acetyl-1-hydroxy-apo-melianone synthase CYP88A164</fullName>
        <ecNumber evidence="3">1.14.14.-</ecNumber>
    </recommendedName>
    <alternativeName>
        <fullName evidence="4">Cytochrome P450 family 88 subfamily A polypeptide 164</fullName>
        <shortName evidence="4">MaCYP88A164</shortName>
    </alternativeName>
</protein>
<accession>P0DXH4</accession>
<feature type="chain" id="PRO_0000461374" description="(21S)-21-acetyl-1-hydroxy-apo-melianone synthase CYP88A164">
    <location>
        <begin position="1"/>
        <end position="490"/>
    </location>
</feature>
<feature type="transmembrane region" description="Helical" evidence="2">
    <location>
        <begin position="4"/>
        <end position="24"/>
    </location>
</feature>
<feature type="binding site" description="axial binding residue" evidence="1">
    <location>
        <position position="438"/>
    </location>
    <ligand>
        <name>heme</name>
        <dbReference type="ChEBI" id="CHEBI:30413"/>
    </ligand>
    <ligandPart>
        <name>Fe</name>
        <dbReference type="ChEBI" id="CHEBI:18248"/>
    </ligandPart>
</feature>
<gene>
    <name evidence="4" type="primary">CYP88A164</name>
</gene>
<dbReference type="EC" id="1.14.14.-" evidence="3"/>
<dbReference type="EMBL" id="OP947599">
    <property type="protein sequence ID" value="WBW48724.1"/>
    <property type="molecule type" value="mRNA"/>
</dbReference>
<dbReference type="SMR" id="P0DXH4"/>
<dbReference type="UniPathway" id="UPA00213"/>
<dbReference type="GO" id="GO:0005783">
    <property type="term" value="C:endoplasmic reticulum"/>
    <property type="evidence" value="ECO:0007669"/>
    <property type="project" value="TreeGrafter"/>
</dbReference>
<dbReference type="GO" id="GO:0016020">
    <property type="term" value="C:membrane"/>
    <property type="evidence" value="ECO:0007669"/>
    <property type="project" value="UniProtKB-SubCell"/>
</dbReference>
<dbReference type="GO" id="GO:0051777">
    <property type="term" value="F:ent-kaurenoic acid monooxygenase activity"/>
    <property type="evidence" value="ECO:0007669"/>
    <property type="project" value="TreeGrafter"/>
</dbReference>
<dbReference type="GO" id="GO:0020037">
    <property type="term" value="F:heme binding"/>
    <property type="evidence" value="ECO:0007669"/>
    <property type="project" value="InterPro"/>
</dbReference>
<dbReference type="GO" id="GO:0005506">
    <property type="term" value="F:iron ion binding"/>
    <property type="evidence" value="ECO:0007669"/>
    <property type="project" value="InterPro"/>
</dbReference>
<dbReference type="GO" id="GO:0016132">
    <property type="term" value="P:brassinosteroid biosynthetic process"/>
    <property type="evidence" value="ECO:0007669"/>
    <property type="project" value="TreeGrafter"/>
</dbReference>
<dbReference type="GO" id="GO:0010268">
    <property type="term" value="P:brassinosteroid homeostasis"/>
    <property type="evidence" value="ECO:0007669"/>
    <property type="project" value="TreeGrafter"/>
</dbReference>
<dbReference type="GO" id="GO:0016125">
    <property type="term" value="P:sterol metabolic process"/>
    <property type="evidence" value="ECO:0007669"/>
    <property type="project" value="TreeGrafter"/>
</dbReference>
<dbReference type="Gene3D" id="1.10.630.10">
    <property type="entry name" value="Cytochrome P450"/>
    <property type="match status" value="1"/>
</dbReference>
<dbReference type="InterPro" id="IPR001128">
    <property type="entry name" value="Cyt_P450"/>
</dbReference>
<dbReference type="InterPro" id="IPR017972">
    <property type="entry name" value="Cyt_P450_CS"/>
</dbReference>
<dbReference type="InterPro" id="IPR002401">
    <property type="entry name" value="Cyt_P450_E_grp-I"/>
</dbReference>
<dbReference type="InterPro" id="IPR036396">
    <property type="entry name" value="Cyt_P450_sf"/>
</dbReference>
<dbReference type="PANTHER" id="PTHR24286">
    <property type="entry name" value="CYTOCHROME P450 26"/>
    <property type="match status" value="1"/>
</dbReference>
<dbReference type="PANTHER" id="PTHR24286:SF199">
    <property type="entry name" value="CYTOCHROME P450 88D6"/>
    <property type="match status" value="1"/>
</dbReference>
<dbReference type="Pfam" id="PF00067">
    <property type="entry name" value="p450"/>
    <property type="match status" value="1"/>
</dbReference>
<dbReference type="PRINTS" id="PR00463">
    <property type="entry name" value="EP450I"/>
</dbReference>
<dbReference type="PRINTS" id="PR00385">
    <property type="entry name" value="P450"/>
</dbReference>
<dbReference type="SUPFAM" id="SSF48264">
    <property type="entry name" value="Cytochrome P450"/>
    <property type="match status" value="1"/>
</dbReference>
<dbReference type="PROSITE" id="PS00086">
    <property type="entry name" value="CYTOCHROME_P450"/>
    <property type="match status" value="1"/>
</dbReference>
<sequence>MGSDLLWLILAIVVGTYVVLFGFLRRANEWYYSMKLGDKSRYLPPGDMGWPIIGNMIPYFKGFRSGEPESFIFDLFEKYGRKGIYRNHIFGSPSIIVLAPEACRQVFLDDDNFKMGYPESTNKLTFRGSFNTASKEGQRRIRKLATSPIRGHKAIAIYIDNIEDIVVKSMNEWASKDKPIEFLSEMRKATFKVIANIFLGSSSESVIGSVEQYYVDYANGLISPLAINLPGFAFHKAMKARDMLGEILEPILRERRSMKEKDQLKGKRGLVDLLMEVEDENGEKLEDVDIVDMLIAFLSAGHESSAHIATWAIIHLHRHPEMLQKARKEQEEIVKKRPASQQGFSIEDFKQMEYIAQVIDETLRITNLSSSSFREAEADVNLQGYIIPKGWKVLLYNRGVHRNPENYPNPKEFDPSRWDNRANRPGYFIPFGGGPRICPGADLAKLEMSIFIHYFLLNYRLEPLNPECPTEYLPVPRPSDQCLARIVKLK</sequence>